<name>GPX8_DANRE</name>
<evidence type="ECO:0000255" key="1"/>
<evidence type="ECO:0000305" key="2"/>
<protein>
    <recommendedName>
        <fullName>Probable glutathione peroxidase 8</fullName>
        <shortName>GPx-8</shortName>
        <shortName>GSHPx-8</shortName>
        <ecNumber>1.11.1.9</ecNumber>
    </recommendedName>
</protein>
<accession>Q7ZV14</accession>
<keyword id="KW-0472">Membrane</keyword>
<keyword id="KW-0560">Oxidoreductase</keyword>
<keyword id="KW-0575">Peroxidase</keyword>
<keyword id="KW-1185">Reference proteome</keyword>
<keyword id="KW-0812">Transmembrane</keyword>
<keyword id="KW-1133">Transmembrane helix</keyword>
<comment type="catalytic activity">
    <reaction>
        <text>2 glutathione + H2O2 = glutathione disulfide + 2 H2O</text>
        <dbReference type="Rhea" id="RHEA:16833"/>
        <dbReference type="ChEBI" id="CHEBI:15377"/>
        <dbReference type="ChEBI" id="CHEBI:16240"/>
        <dbReference type="ChEBI" id="CHEBI:57925"/>
        <dbReference type="ChEBI" id="CHEBI:58297"/>
        <dbReference type="EC" id="1.11.1.9"/>
    </reaction>
</comment>
<comment type="subcellular location">
    <subcellularLocation>
        <location evidence="2">Membrane</location>
        <topology evidence="2">Single-pass membrane protein</topology>
    </subcellularLocation>
</comment>
<comment type="similarity">
    <text evidence="2">Belongs to the glutathione peroxidase family.</text>
</comment>
<comment type="caution">
    <text evidence="2">Ser-80 is present instead of the conserved Cys/Sec which is expected to be the active site residue.</text>
</comment>
<reference key="1">
    <citation type="submission" date="2003-01" db="EMBL/GenBank/DDBJ databases">
        <authorList>
            <consortium name="NIH - Zebrafish Gene Collection (ZGC) project"/>
        </authorList>
    </citation>
    <scope>NUCLEOTIDE SEQUENCE [LARGE SCALE MRNA]</scope>
</reference>
<gene>
    <name type="primary">gpx8</name>
    <name type="ORF">zgc:56280</name>
</gene>
<feature type="chain" id="PRO_0000317758" description="Probable glutathione peroxidase 8">
    <location>
        <begin position="1"/>
        <end position="210"/>
    </location>
</feature>
<feature type="transmembrane region" description="Helical" evidence="1">
    <location>
        <begin position="13"/>
        <end position="35"/>
    </location>
</feature>
<organism>
    <name type="scientific">Danio rerio</name>
    <name type="common">Zebrafish</name>
    <name type="synonym">Brachydanio rerio</name>
    <dbReference type="NCBI Taxonomy" id="7955"/>
    <lineage>
        <taxon>Eukaryota</taxon>
        <taxon>Metazoa</taxon>
        <taxon>Chordata</taxon>
        <taxon>Craniata</taxon>
        <taxon>Vertebrata</taxon>
        <taxon>Euteleostomi</taxon>
        <taxon>Actinopterygii</taxon>
        <taxon>Neopterygii</taxon>
        <taxon>Teleostei</taxon>
        <taxon>Ostariophysi</taxon>
        <taxon>Cypriniformes</taxon>
        <taxon>Danionidae</taxon>
        <taxon>Danioninae</taxon>
        <taxon>Danio</taxon>
    </lineage>
</organism>
<dbReference type="EC" id="1.11.1.9"/>
<dbReference type="EMBL" id="BC046044">
    <property type="protein sequence ID" value="AAH46044.1"/>
    <property type="molecule type" value="mRNA"/>
</dbReference>
<dbReference type="RefSeq" id="NP_956516.1">
    <property type="nucleotide sequence ID" value="NM_200222.1"/>
</dbReference>
<dbReference type="SMR" id="Q7ZV14"/>
<dbReference type="FunCoup" id="Q7ZV14">
    <property type="interactions" value="183"/>
</dbReference>
<dbReference type="STRING" id="7955.ENSDARP00000011955"/>
<dbReference type="PaxDb" id="7955-ENSDARP00000011955"/>
<dbReference type="GeneID" id="393191"/>
<dbReference type="KEGG" id="dre:393191"/>
<dbReference type="AGR" id="ZFIN:ZDB-GENE-040426-965"/>
<dbReference type="CTD" id="493869"/>
<dbReference type="ZFIN" id="ZDB-GENE-040426-965">
    <property type="gene designation" value="gpx8"/>
</dbReference>
<dbReference type="eggNOG" id="KOG1651">
    <property type="taxonomic scope" value="Eukaryota"/>
</dbReference>
<dbReference type="InParanoid" id="Q7ZV14"/>
<dbReference type="OrthoDB" id="446890at2759"/>
<dbReference type="PhylomeDB" id="Q7ZV14"/>
<dbReference type="Reactome" id="R-DRE-3299685">
    <property type="pathway name" value="Detoxification of Reactive Oxygen Species"/>
</dbReference>
<dbReference type="PRO" id="PR:Q7ZV14"/>
<dbReference type="Proteomes" id="UP000000437">
    <property type="component" value="Chromosome 8"/>
</dbReference>
<dbReference type="GO" id="GO:0016020">
    <property type="term" value="C:membrane"/>
    <property type="evidence" value="ECO:0007669"/>
    <property type="project" value="UniProtKB-SubCell"/>
</dbReference>
<dbReference type="GO" id="GO:0004602">
    <property type="term" value="F:glutathione peroxidase activity"/>
    <property type="evidence" value="ECO:0007669"/>
    <property type="project" value="UniProtKB-EC"/>
</dbReference>
<dbReference type="GO" id="GO:0004601">
    <property type="term" value="F:peroxidase activity"/>
    <property type="evidence" value="ECO:0000318"/>
    <property type="project" value="GO_Central"/>
</dbReference>
<dbReference type="GO" id="GO:0006979">
    <property type="term" value="P:response to oxidative stress"/>
    <property type="evidence" value="ECO:0007669"/>
    <property type="project" value="InterPro"/>
</dbReference>
<dbReference type="CDD" id="cd00340">
    <property type="entry name" value="GSH_Peroxidase"/>
    <property type="match status" value="1"/>
</dbReference>
<dbReference type="FunFam" id="3.40.30.10:FF:000049">
    <property type="entry name" value="Glutathione peroxidase"/>
    <property type="match status" value="1"/>
</dbReference>
<dbReference type="Gene3D" id="3.40.30.10">
    <property type="entry name" value="Glutaredoxin"/>
    <property type="match status" value="1"/>
</dbReference>
<dbReference type="InterPro" id="IPR013376">
    <property type="entry name" value="Glut_perox_Gpx7"/>
</dbReference>
<dbReference type="InterPro" id="IPR000889">
    <property type="entry name" value="Glutathione_peroxidase"/>
</dbReference>
<dbReference type="InterPro" id="IPR036249">
    <property type="entry name" value="Thioredoxin-like_sf"/>
</dbReference>
<dbReference type="NCBIfam" id="TIGR02540">
    <property type="entry name" value="gpx7"/>
    <property type="match status" value="1"/>
</dbReference>
<dbReference type="PANTHER" id="PTHR11592">
    <property type="entry name" value="GLUTATHIONE PEROXIDASE"/>
    <property type="match status" value="1"/>
</dbReference>
<dbReference type="PANTHER" id="PTHR11592:SF7">
    <property type="entry name" value="GLUTATHIONE PEROXIDASE 8-RELATED"/>
    <property type="match status" value="1"/>
</dbReference>
<dbReference type="Pfam" id="PF00255">
    <property type="entry name" value="GSHPx"/>
    <property type="match status" value="1"/>
</dbReference>
<dbReference type="PRINTS" id="PR01011">
    <property type="entry name" value="GLUTPROXDASE"/>
</dbReference>
<dbReference type="SUPFAM" id="SSF52833">
    <property type="entry name" value="Thioredoxin-like"/>
    <property type="match status" value="1"/>
</dbReference>
<dbReference type="PROSITE" id="PS00014">
    <property type="entry name" value="ER_TARGET"/>
    <property type="match status" value="1"/>
</dbReference>
<dbReference type="PROSITE" id="PS51355">
    <property type="entry name" value="GLUTATHIONE_PEROXID_3"/>
    <property type="match status" value="1"/>
</dbReference>
<sequence length="210" mass="23806">MEALGGYPSKSSASRAGLFKVLLSVALCMGSLYLLQNKLSKSRKTKDFYSYEVKDARGRTVSLEKYRGKVSLVVNVASGSELTEQSYRALQELHRELGTSHFNVLAFPCSQYGDTESGTSREIEAFAKSNYGVTFPIFNKIKIMGSEAEPAFRFLTDSVQKIPRWNFWKFLVSPEGQVVRFWKPEEPVSDIRKEATTLVRNIILKKRQEL</sequence>
<proteinExistence type="evidence at transcript level"/>